<feature type="chain" id="PRO_0000050677" description="HTH-type transcriptional regulator GgaR">
    <location>
        <begin position="1"/>
        <end position="248"/>
    </location>
</feature>
<feature type="domain" description="HTH gntR-type" evidence="2">
    <location>
        <begin position="22"/>
        <end position="90"/>
    </location>
</feature>
<feature type="DNA-binding region" description="H-T-H motif" evidence="2">
    <location>
        <begin position="50"/>
        <end position="69"/>
    </location>
</feature>
<name>GGAR_ECO57</name>
<comment type="function">
    <text evidence="1">Transcriptional regulator that regulates glycogen accumulation in response to the amount of glucose available to the cell. Acts as a repressor of the yegTUV operon, which may be involved in glycogen accumulation.</text>
</comment>
<comment type="activity regulation">
    <text evidence="1">Senses ADP-glucose (ADPG), which is the substrate for glycogen elongation, as an effector. In the presence of ADPG, GgaR becomes inactive and derepresses the yegTUV operon, leading to glycogen accumulation. In contrast, in the absence of glucose, the concentration of ADPG decreases, GgaR becomes active, and glycogen accumulation is repressed.</text>
</comment>
<proteinExistence type="inferred from homology"/>
<accession>P0ACM7</accession>
<accession>O08014</accession>
<accession>P76420</accession>
<dbReference type="EMBL" id="AE005174">
    <property type="protein sequence ID" value="AAG57158.1"/>
    <property type="molecule type" value="Genomic_DNA"/>
</dbReference>
<dbReference type="EMBL" id="BA000007">
    <property type="protein sequence ID" value="BAB36327.1"/>
    <property type="molecule type" value="Genomic_DNA"/>
</dbReference>
<dbReference type="PIR" id="B85837">
    <property type="entry name" value="B85837"/>
</dbReference>
<dbReference type="PIR" id="H90991">
    <property type="entry name" value="H90991"/>
</dbReference>
<dbReference type="RefSeq" id="NP_310931.1">
    <property type="nucleotide sequence ID" value="NC_002695.1"/>
</dbReference>
<dbReference type="RefSeq" id="WP_000434038.1">
    <property type="nucleotide sequence ID" value="NZ_VOAI01000013.1"/>
</dbReference>
<dbReference type="SMR" id="P0ACM7"/>
<dbReference type="STRING" id="155864.Z3264"/>
<dbReference type="GeneID" id="916607"/>
<dbReference type="KEGG" id="ece:Z3264"/>
<dbReference type="KEGG" id="ecs:ECs_2904"/>
<dbReference type="PATRIC" id="fig|386585.9.peg.3036"/>
<dbReference type="eggNOG" id="COG2188">
    <property type="taxonomic scope" value="Bacteria"/>
</dbReference>
<dbReference type="HOGENOM" id="CLU_063236_4_0_6"/>
<dbReference type="OMA" id="QTGVALW"/>
<dbReference type="Proteomes" id="UP000000558">
    <property type="component" value="Chromosome"/>
</dbReference>
<dbReference type="Proteomes" id="UP000002519">
    <property type="component" value="Chromosome"/>
</dbReference>
<dbReference type="GO" id="GO:0003677">
    <property type="term" value="F:DNA binding"/>
    <property type="evidence" value="ECO:0007669"/>
    <property type="project" value="UniProtKB-KW"/>
</dbReference>
<dbReference type="GO" id="GO:0003700">
    <property type="term" value="F:DNA-binding transcription factor activity"/>
    <property type="evidence" value="ECO:0007669"/>
    <property type="project" value="InterPro"/>
</dbReference>
<dbReference type="GO" id="GO:0045892">
    <property type="term" value="P:negative regulation of DNA-templated transcription"/>
    <property type="evidence" value="ECO:0007669"/>
    <property type="project" value="TreeGrafter"/>
</dbReference>
<dbReference type="CDD" id="cd07377">
    <property type="entry name" value="WHTH_GntR"/>
    <property type="match status" value="1"/>
</dbReference>
<dbReference type="Gene3D" id="3.40.1410.10">
    <property type="entry name" value="Chorismate lyase-like"/>
    <property type="match status" value="1"/>
</dbReference>
<dbReference type="Gene3D" id="1.10.10.10">
    <property type="entry name" value="Winged helix-like DNA-binding domain superfamily/Winged helix DNA-binding domain"/>
    <property type="match status" value="1"/>
</dbReference>
<dbReference type="InterPro" id="IPR050679">
    <property type="entry name" value="Bact_HTH_transcr_reg"/>
</dbReference>
<dbReference type="InterPro" id="IPR028978">
    <property type="entry name" value="Chorismate_lyase_/UTRA_dom_sf"/>
</dbReference>
<dbReference type="InterPro" id="IPR000524">
    <property type="entry name" value="Tscrpt_reg_HTH_GntR"/>
</dbReference>
<dbReference type="InterPro" id="IPR011663">
    <property type="entry name" value="UTRA"/>
</dbReference>
<dbReference type="InterPro" id="IPR036388">
    <property type="entry name" value="WH-like_DNA-bd_sf"/>
</dbReference>
<dbReference type="InterPro" id="IPR036390">
    <property type="entry name" value="WH_DNA-bd_sf"/>
</dbReference>
<dbReference type="PANTHER" id="PTHR44846">
    <property type="entry name" value="MANNOSYL-D-GLYCERATE TRANSPORT/METABOLISM SYSTEM REPRESSOR MNGR-RELATED"/>
    <property type="match status" value="1"/>
</dbReference>
<dbReference type="PANTHER" id="PTHR44846:SF1">
    <property type="entry name" value="MANNOSYL-D-GLYCERATE TRANSPORT_METABOLISM SYSTEM REPRESSOR MNGR-RELATED"/>
    <property type="match status" value="1"/>
</dbReference>
<dbReference type="Pfam" id="PF00392">
    <property type="entry name" value="GntR"/>
    <property type="match status" value="1"/>
</dbReference>
<dbReference type="Pfam" id="PF07702">
    <property type="entry name" value="UTRA"/>
    <property type="match status" value="1"/>
</dbReference>
<dbReference type="PRINTS" id="PR00035">
    <property type="entry name" value="HTHGNTR"/>
</dbReference>
<dbReference type="SMART" id="SM00345">
    <property type="entry name" value="HTH_GNTR"/>
    <property type="match status" value="1"/>
</dbReference>
<dbReference type="SMART" id="SM00866">
    <property type="entry name" value="UTRA"/>
    <property type="match status" value="1"/>
</dbReference>
<dbReference type="SUPFAM" id="SSF64288">
    <property type="entry name" value="Chorismate lyase-like"/>
    <property type="match status" value="1"/>
</dbReference>
<dbReference type="SUPFAM" id="SSF46785">
    <property type="entry name" value="Winged helix' DNA-binding domain"/>
    <property type="match status" value="1"/>
</dbReference>
<dbReference type="PROSITE" id="PS50949">
    <property type="entry name" value="HTH_GNTR"/>
    <property type="match status" value="1"/>
</dbReference>
<reference key="1">
    <citation type="journal article" date="2001" name="Nature">
        <title>Genome sequence of enterohaemorrhagic Escherichia coli O157:H7.</title>
        <authorList>
            <person name="Perna N.T."/>
            <person name="Plunkett G. III"/>
            <person name="Burland V."/>
            <person name="Mau B."/>
            <person name="Glasner J.D."/>
            <person name="Rose D.J."/>
            <person name="Mayhew G.F."/>
            <person name="Evans P.S."/>
            <person name="Gregor J."/>
            <person name="Kirkpatrick H.A."/>
            <person name="Posfai G."/>
            <person name="Hackett J."/>
            <person name="Klink S."/>
            <person name="Boutin A."/>
            <person name="Shao Y."/>
            <person name="Miller L."/>
            <person name="Grotbeck E.J."/>
            <person name="Davis N.W."/>
            <person name="Lim A."/>
            <person name="Dimalanta E.T."/>
            <person name="Potamousis K."/>
            <person name="Apodaca J."/>
            <person name="Anantharaman T.S."/>
            <person name="Lin J."/>
            <person name="Yen G."/>
            <person name="Schwartz D.C."/>
            <person name="Welch R.A."/>
            <person name="Blattner F.R."/>
        </authorList>
    </citation>
    <scope>NUCLEOTIDE SEQUENCE [LARGE SCALE GENOMIC DNA]</scope>
    <source>
        <strain>O157:H7 / EDL933 / ATCC 700927 / EHEC</strain>
    </source>
</reference>
<reference key="2">
    <citation type="journal article" date="2001" name="DNA Res.">
        <title>Complete genome sequence of enterohemorrhagic Escherichia coli O157:H7 and genomic comparison with a laboratory strain K-12.</title>
        <authorList>
            <person name="Hayashi T."/>
            <person name="Makino K."/>
            <person name="Ohnishi M."/>
            <person name="Kurokawa K."/>
            <person name="Ishii K."/>
            <person name="Yokoyama K."/>
            <person name="Han C.-G."/>
            <person name="Ohtsubo E."/>
            <person name="Nakayama K."/>
            <person name="Murata T."/>
            <person name="Tanaka M."/>
            <person name="Tobe T."/>
            <person name="Iida T."/>
            <person name="Takami H."/>
            <person name="Honda T."/>
            <person name="Sasakawa C."/>
            <person name="Ogasawara N."/>
            <person name="Yasunaga T."/>
            <person name="Kuhara S."/>
            <person name="Shiba T."/>
            <person name="Hattori M."/>
            <person name="Shinagawa H."/>
        </authorList>
    </citation>
    <scope>NUCLEOTIDE SEQUENCE [LARGE SCALE GENOMIC DNA]</scope>
    <source>
        <strain>O157:H7 / Sakai / RIMD 0509952 / EHEC</strain>
    </source>
</reference>
<organism>
    <name type="scientific">Escherichia coli O157:H7</name>
    <dbReference type="NCBI Taxonomy" id="83334"/>
    <lineage>
        <taxon>Bacteria</taxon>
        <taxon>Pseudomonadati</taxon>
        <taxon>Pseudomonadota</taxon>
        <taxon>Gammaproteobacteria</taxon>
        <taxon>Enterobacterales</taxon>
        <taxon>Enterobacteriaceae</taxon>
        <taxon>Escherichia</taxon>
    </lineage>
</organism>
<gene>
    <name evidence="1" type="primary">ggaR</name>
    <name type="synonym">yegW</name>
    <name type="ordered locus">Z3264</name>
    <name type="ordered locus">ECs2904</name>
</gene>
<evidence type="ECO:0000250" key="1">
    <source>
        <dbReference type="UniProtKB" id="P0ACM5"/>
    </source>
</evidence>
<evidence type="ECO:0000255" key="2">
    <source>
        <dbReference type="PROSITE-ProRule" id="PRU00307"/>
    </source>
</evidence>
<protein>
    <recommendedName>
        <fullName evidence="1">HTH-type transcriptional regulator GgaR</fullName>
    </recommendedName>
    <alternativeName>
        <fullName evidence="1">Repressor of glycogen accumulation</fullName>
    </alternativeName>
</protein>
<keyword id="KW-0238">DNA-binding</keyword>
<keyword id="KW-1185">Reference proteome</keyword>
<keyword id="KW-0678">Repressor</keyword>
<keyword id="KW-0804">Transcription</keyword>
<keyword id="KW-0805">Transcription regulation</keyword>
<sequence>MEQAHTQLIAQLNERILAADNTPLYIKFAETVKNAVRSGVLEHGNILPGERDLSQLTGVSRITVRKAMQALEEEGVVTRSRGYGTQINNIFEYSLKEARGFSQQVVLRGKKPDTLWVNKRVVKCPEEVAQQLAVEAGSDVFLLKRIRYVDEEAVSIEESWVPAHLIHDVDAIGISLYDYFRSQHIYPQRTRSRVSARMPDAEFQSHIQLDSKIPVLVIKQVALDQQQRPIEYSISHCRSDLYVFVCEE</sequence>